<dbReference type="EMBL" id="AF071223">
    <property type="protein sequence ID" value="AAC68868.1"/>
    <property type="molecule type" value="mRNA"/>
</dbReference>
<dbReference type="EMBL" id="AF418923">
    <property type="protein sequence ID" value="AAL11912.1"/>
    <property type="molecule type" value="Genomic_DNA"/>
</dbReference>
<dbReference type="EMBL" id="BC092234">
    <property type="protein sequence ID" value="AAH92234.1"/>
    <property type="molecule type" value="mRNA"/>
</dbReference>
<dbReference type="CCDS" id="CCDS23896.1"/>
<dbReference type="RefSeq" id="NP_058560.1">
    <property type="nucleotide sequence ID" value="NM_016864.3"/>
</dbReference>
<dbReference type="SMR" id="Q9Z2E5"/>
<dbReference type="FunCoup" id="Q9Z2E5">
    <property type="interactions" value="120"/>
</dbReference>
<dbReference type="STRING" id="10090.ENSMUSP00000039801"/>
<dbReference type="PhosphoSitePlus" id="Q9Z2E5"/>
<dbReference type="PaxDb" id="10090-ENSMUSP00000039801"/>
<dbReference type="Antibodypedia" id="28437">
    <property type="antibodies" value="214 antibodies from 26 providers"/>
</dbReference>
<dbReference type="DNASU" id="53404"/>
<dbReference type="Ensembl" id="ENSMUST00000044059.5">
    <property type="protein sequence ID" value="ENSMUSP00000039801.4"/>
    <property type="gene ID" value="ENSMUSG00000036816.5"/>
</dbReference>
<dbReference type="GeneID" id="53404"/>
<dbReference type="KEGG" id="mmu:53404"/>
<dbReference type="UCSC" id="uc007fjv.1">
    <property type="organism name" value="mouse"/>
</dbReference>
<dbReference type="AGR" id="MGI:1355553"/>
<dbReference type="CTD" id="220202"/>
<dbReference type="MGI" id="MGI:1355553">
    <property type="gene designation" value="Atoh7"/>
</dbReference>
<dbReference type="VEuPathDB" id="HostDB:ENSMUSG00000036816"/>
<dbReference type="eggNOG" id="KOG4395">
    <property type="taxonomic scope" value="Eukaryota"/>
</dbReference>
<dbReference type="GeneTree" id="ENSGT00940000161556"/>
<dbReference type="HOGENOM" id="CLU_145503_0_0_1"/>
<dbReference type="InParanoid" id="Q9Z2E5"/>
<dbReference type="OMA" id="WINLHCE"/>
<dbReference type="OrthoDB" id="6161578at2759"/>
<dbReference type="PhylomeDB" id="Q9Z2E5"/>
<dbReference type="TreeFam" id="TF315153"/>
<dbReference type="BioGRID-ORCS" id="53404">
    <property type="hits" value="1 hit in 80 CRISPR screens"/>
</dbReference>
<dbReference type="ChiTaRS" id="Atoh7">
    <property type="organism name" value="mouse"/>
</dbReference>
<dbReference type="PRO" id="PR:Q9Z2E5"/>
<dbReference type="Proteomes" id="UP000000589">
    <property type="component" value="Chromosome 10"/>
</dbReference>
<dbReference type="RNAct" id="Q9Z2E5">
    <property type="molecule type" value="protein"/>
</dbReference>
<dbReference type="Bgee" id="ENSMUSG00000036816">
    <property type="expression patterns" value="Expressed in urethra and 51 other cell types or tissues"/>
</dbReference>
<dbReference type="GO" id="GO:0030424">
    <property type="term" value="C:axon"/>
    <property type="evidence" value="ECO:0000314"/>
    <property type="project" value="UniProtKB"/>
</dbReference>
<dbReference type="GO" id="GO:0005829">
    <property type="term" value="C:cytosol"/>
    <property type="evidence" value="ECO:0007669"/>
    <property type="project" value="Ensembl"/>
</dbReference>
<dbReference type="GO" id="GO:0005654">
    <property type="term" value="C:nucleoplasm"/>
    <property type="evidence" value="ECO:0007669"/>
    <property type="project" value="Ensembl"/>
</dbReference>
<dbReference type="GO" id="GO:0005634">
    <property type="term" value="C:nucleus"/>
    <property type="evidence" value="ECO:0000315"/>
    <property type="project" value="UniProtKB"/>
</dbReference>
<dbReference type="GO" id="GO:0043204">
    <property type="term" value="C:perikaryon"/>
    <property type="evidence" value="ECO:0000314"/>
    <property type="project" value="UniProtKB"/>
</dbReference>
<dbReference type="GO" id="GO:0046983">
    <property type="term" value="F:protein dimerization activity"/>
    <property type="evidence" value="ECO:0007669"/>
    <property type="project" value="InterPro"/>
</dbReference>
<dbReference type="GO" id="GO:0000976">
    <property type="term" value="F:transcription cis-regulatory region binding"/>
    <property type="evidence" value="ECO:0000314"/>
    <property type="project" value="UniProtKB"/>
</dbReference>
<dbReference type="GO" id="GO:0030154">
    <property type="term" value="P:cell differentiation"/>
    <property type="evidence" value="ECO:0007669"/>
    <property type="project" value="UniProtKB-KW"/>
</dbReference>
<dbReference type="GO" id="GO:0007623">
    <property type="term" value="P:circadian rhythm"/>
    <property type="evidence" value="ECO:0000315"/>
    <property type="project" value="MGI"/>
</dbReference>
<dbReference type="GO" id="GO:0009649">
    <property type="term" value="P:entrainment of circadian clock"/>
    <property type="evidence" value="ECO:0000315"/>
    <property type="project" value="MGI"/>
</dbReference>
<dbReference type="GO" id="GO:0043153">
    <property type="term" value="P:entrainment of circadian clock by photoperiod"/>
    <property type="evidence" value="ECO:0000315"/>
    <property type="project" value="UniProtKB"/>
</dbReference>
<dbReference type="GO" id="GO:0003407">
    <property type="term" value="P:neural retina development"/>
    <property type="evidence" value="ECO:0000315"/>
    <property type="project" value="MGI"/>
</dbReference>
<dbReference type="GO" id="GO:0021554">
    <property type="term" value="P:optic nerve development"/>
    <property type="evidence" value="ECO:0000266"/>
    <property type="project" value="MGI"/>
</dbReference>
<dbReference type="GO" id="GO:1902336">
    <property type="term" value="P:positive regulation of retinal ganglion cell axon guidance"/>
    <property type="evidence" value="ECO:0000315"/>
    <property type="project" value="UniProtKB"/>
</dbReference>
<dbReference type="GO" id="GO:0045944">
    <property type="term" value="P:positive regulation of transcription by RNA polymerase II"/>
    <property type="evidence" value="ECO:0007669"/>
    <property type="project" value="Ensembl"/>
</dbReference>
<dbReference type="GO" id="GO:0006357">
    <property type="term" value="P:regulation of transcription by RNA polymerase II"/>
    <property type="evidence" value="ECO:0000315"/>
    <property type="project" value="UniProtKB"/>
</dbReference>
<dbReference type="GO" id="GO:0010996">
    <property type="term" value="P:response to auditory stimulus"/>
    <property type="evidence" value="ECO:0000315"/>
    <property type="project" value="UniProtKB"/>
</dbReference>
<dbReference type="CDD" id="cd19714">
    <property type="entry name" value="bHLH_TS_ATOH7"/>
    <property type="match status" value="1"/>
</dbReference>
<dbReference type="FunFam" id="4.10.280.10:FF:000025">
    <property type="entry name" value="protein atonal homolog 7"/>
    <property type="match status" value="1"/>
</dbReference>
<dbReference type="Gene3D" id="4.10.280.10">
    <property type="entry name" value="Helix-loop-helix DNA-binding domain"/>
    <property type="match status" value="1"/>
</dbReference>
<dbReference type="InterPro" id="IPR032663">
    <property type="entry name" value="ATOH7_bHLH"/>
</dbReference>
<dbReference type="InterPro" id="IPR011598">
    <property type="entry name" value="bHLH_dom"/>
</dbReference>
<dbReference type="InterPro" id="IPR050359">
    <property type="entry name" value="bHLH_transcription_factors"/>
</dbReference>
<dbReference type="InterPro" id="IPR036638">
    <property type="entry name" value="HLH_DNA-bd_sf"/>
</dbReference>
<dbReference type="PANTHER" id="PTHR19290">
    <property type="entry name" value="BASIC HELIX-LOOP-HELIX PROTEIN NEUROGENIN-RELATED"/>
    <property type="match status" value="1"/>
</dbReference>
<dbReference type="PANTHER" id="PTHR19290:SF99">
    <property type="entry name" value="TRANSCRIPTION FACTOR ATOH7"/>
    <property type="match status" value="1"/>
</dbReference>
<dbReference type="Pfam" id="PF00010">
    <property type="entry name" value="HLH"/>
    <property type="match status" value="1"/>
</dbReference>
<dbReference type="SMART" id="SM00353">
    <property type="entry name" value="HLH"/>
    <property type="match status" value="1"/>
</dbReference>
<dbReference type="SUPFAM" id="SSF47459">
    <property type="entry name" value="HLH, helix-loop-helix DNA-binding domain"/>
    <property type="match status" value="1"/>
</dbReference>
<dbReference type="PROSITE" id="PS50888">
    <property type="entry name" value="BHLH"/>
    <property type="match status" value="1"/>
</dbReference>
<name>ATOH7_MOUSE</name>
<reference key="1">
    <citation type="journal article" date="1998" name="Development">
        <title>Math5 encodes a murine basic helix-loop-helix transcription factor expressed during early stages of retinal neurogenesis.</title>
        <authorList>
            <person name="Brown N.L."/>
            <person name="Kanekar S."/>
            <person name="Vetter M.L."/>
            <person name="Tucker P.K."/>
            <person name="Gemza D.L."/>
            <person name="Glaser T."/>
        </authorList>
    </citation>
    <scope>NUCLEOTIDE SEQUENCE [MRNA]</scope>
    <scope>DEVELOPMENTAL STAGE</scope>
    <source>
        <strain>129/SvJ</strain>
        <tissue>Retina</tissue>
    </source>
</reference>
<reference key="2">
    <citation type="journal article" date="2002" name="Mamm. Genome">
        <title>Molecular characterization and mapping of ATOH7, a human atonal homolog with a predicted role in retinal ganglion cell development.</title>
        <authorList>
            <person name="Brown N.L."/>
            <person name="Dagenais S.L."/>
            <person name="Chen C.-M."/>
            <person name="Glaser T."/>
        </authorList>
    </citation>
    <scope>NUCLEOTIDE SEQUENCE [GENOMIC DNA]</scope>
    <source>
        <strain>129S4/SvJae</strain>
    </source>
</reference>
<reference key="3">
    <citation type="journal article" date="2004" name="Genome Res.">
        <title>The status, quality, and expansion of the NIH full-length cDNA project: the Mammalian Gene Collection (MGC).</title>
        <authorList>
            <consortium name="The MGC Project Team"/>
        </authorList>
    </citation>
    <scope>NUCLEOTIDE SEQUENCE [LARGE SCALE MRNA]</scope>
    <source>
        <strain>C57BL/6J</strain>
        <tissue>Eye</tissue>
    </source>
</reference>
<reference key="4">
    <citation type="journal article" date="2001" name="Development">
        <title>Math5 is required for retinal ganglion cell and optic nerve formation.</title>
        <authorList>
            <person name="Brown N.L."/>
            <person name="Patel S."/>
            <person name="Brzezinski J."/>
            <person name="Glaser T."/>
        </authorList>
    </citation>
    <scope>FUNCTION</scope>
    <scope>DISRUPTION PHENOTYPE</scope>
</reference>
<reference key="5">
    <citation type="journal article" date="2001" name="Genes Dev.">
        <title>Requirement for math5 in the development of retinal ganglion cells.</title>
        <authorList>
            <person name="Wang S.W."/>
            <person name="Kim B.S."/>
            <person name="Ding K."/>
            <person name="Wang H."/>
            <person name="Sun D."/>
            <person name="Johnson R.L."/>
            <person name="Klein W.H."/>
            <person name="Gan L."/>
        </authorList>
    </citation>
    <scope>FUNCTION</scope>
    <scope>DISRUPTION PHENOTYPE</scope>
</reference>
<reference key="6">
    <citation type="journal article" date="2002" name="J. Neurosci.">
        <title>Loss of photic entrainment and altered free-running circadian rhythms in math5-/- mice.</title>
        <authorList>
            <person name="Wee R."/>
            <person name="Castrucci A.M."/>
            <person name="Provencio I."/>
            <person name="Gan L."/>
            <person name="Van Gelder R.N."/>
        </authorList>
    </citation>
    <scope>FUNCTION</scope>
    <scope>DISRUPTION PHENOTYPE</scope>
</reference>
<reference key="7">
    <citation type="journal article" date="2008" name="Mol. Cell. Neurosci.">
        <title>Math5 expression and function in the central auditory system.</title>
        <authorList>
            <person name="Saul S.M."/>
            <person name="Brzezinski J.A. IV"/>
            <person name="Altschuler R.A."/>
            <person name="Shore S.E."/>
            <person name="Rudolph D.D."/>
            <person name="Kabara L.L."/>
            <person name="Halsey K.E."/>
            <person name="Hufnagel R.B."/>
            <person name="Zhou J."/>
            <person name="Dolan D.F."/>
            <person name="Glaser T."/>
        </authorList>
    </citation>
    <scope>FUNCTION</scope>
    <scope>SUBCELLULAR LOCATION</scope>
    <scope>TISSUE SPECIFICITY</scope>
    <scope>DISRUPTION PHENOTYPE</scope>
</reference>
<reference key="8">
    <citation type="journal article" date="2015" name="Proc. Natl. Acad. Sci. U.S.A.">
        <title>Neuropsin (OPN5)-mediated photoentrainment of local circadian oscillators in mammalian retina and cornea.</title>
        <authorList>
            <person name="Buhr E.D."/>
            <person name="Yue W.W."/>
            <person name="Ren X."/>
            <person name="Jiang Z."/>
            <person name="Liao H.W."/>
            <person name="Mei X."/>
            <person name="Vemaraju S."/>
            <person name="Nguyen M.T."/>
            <person name="Reed R.R."/>
            <person name="Lang R.A."/>
            <person name="Yau K.W."/>
            <person name="Van Gelder R.N."/>
        </authorList>
    </citation>
    <scope>FUNCTION</scope>
    <scope>TISSUE SPECIFICITY</scope>
    <scope>DISRUPTION PHENOTYPE</scope>
</reference>
<reference key="9">
    <citation type="journal article" date="2021" name="Sci. Adv.">
        <title>Atoh7-independent specification of retinal ganglion cell identity.</title>
        <authorList>
            <person name="Brodie-Kommit J."/>
            <person name="Clark B.S."/>
            <person name="Shi Q."/>
            <person name="Shiau F."/>
            <person name="Kim D.W."/>
            <person name="Langel J."/>
            <person name="Sheely C."/>
            <person name="Ruzycki P.A."/>
            <person name="Fries M."/>
            <person name="Javed A."/>
            <person name="Cayouette M."/>
            <person name="Schmidt T."/>
            <person name="Badea T."/>
            <person name="Glaser T."/>
            <person name="Zhao H."/>
            <person name="Singer J."/>
            <person name="Blackshaw S."/>
            <person name="Hattar S."/>
        </authorList>
    </citation>
    <scope>FUNCTION</scope>
    <scope>SUBCELLULAR LOCATION</scope>
    <scope>DISRUPTION PHENOTYPE</scope>
</reference>
<protein>
    <recommendedName>
        <fullName evidence="11">Transcription factor Atoh7</fullName>
    </recommendedName>
    <alternativeName>
        <fullName evidence="12">Atonal bHLH transcription factor 7</fullName>
    </alternativeName>
    <alternativeName>
        <fullName evidence="10">Helix-loop-helix protein mATH-5</fullName>
        <shortName evidence="10">mATH5</shortName>
    </alternativeName>
    <alternativeName>
        <fullName evidence="12">Protein atonal homolog 7</fullName>
    </alternativeName>
</protein>
<keyword id="KW-0966">Cell projection</keyword>
<keyword id="KW-0217">Developmental protein</keyword>
<keyword id="KW-0221">Differentiation</keyword>
<keyword id="KW-0238">DNA-binding</keyword>
<keyword id="KW-0524">Neurogenesis</keyword>
<keyword id="KW-0539">Nucleus</keyword>
<keyword id="KW-1185">Reference proteome</keyword>
<keyword id="KW-0804">Transcription</keyword>
<keyword id="KW-0805">Transcription regulation</keyword>
<sequence length="149" mass="16569">MKSACKPHGPPAGARGAPPCAGAAERAVSCAGPGRLESAARRRLAANARERRRMQGLNTAFDRLRRVVPQWGQDKKLSKYETLQMALSYIIALTRILAEAERDWVGLRCEQRGRDHPYLPFPGARLQVDPEPYGQRLFGFQPEPFPMAS</sequence>
<organism>
    <name type="scientific">Mus musculus</name>
    <name type="common">Mouse</name>
    <dbReference type="NCBI Taxonomy" id="10090"/>
    <lineage>
        <taxon>Eukaryota</taxon>
        <taxon>Metazoa</taxon>
        <taxon>Chordata</taxon>
        <taxon>Craniata</taxon>
        <taxon>Vertebrata</taxon>
        <taxon>Euteleostomi</taxon>
        <taxon>Mammalia</taxon>
        <taxon>Eutheria</taxon>
        <taxon>Euarchontoglires</taxon>
        <taxon>Glires</taxon>
        <taxon>Rodentia</taxon>
        <taxon>Myomorpha</taxon>
        <taxon>Muroidea</taxon>
        <taxon>Muridae</taxon>
        <taxon>Murinae</taxon>
        <taxon>Mus</taxon>
        <taxon>Mus</taxon>
    </lineage>
</organism>
<gene>
    <name evidence="12" type="primary">Atoh7</name>
    <name type="synonym">Ath5</name>
</gene>
<proteinExistence type="evidence at transcript level"/>
<feature type="chain" id="PRO_0000292407" description="Transcription factor Atoh7">
    <location>
        <begin position="1"/>
        <end position="149"/>
    </location>
</feature>
<feature type="domain" description="bHLH" evidence="2">
    <location>
        <begin position="41"/>
        <end position="93"/>
    </location>
</feature>
<evidence type="ECO:0000250" key="1">
    <source>
        <dbReference type="UniProtKB" id="Q8N100"/>
    </source>
</evidence>
<evidence type="ECO:0000255" key="2">
    <source>
        <dbReference type="PROSITE-ProRule" id="PRU00981"/>
    </source>
</evidence>
<evidence type="ECO:0000269" key="3">
    <source>
    </source>
</evidence>
<evidence type="ECO:0000269" key="4">
    <source>
    </source>
</evidence>
<evidence type="ECO:0000269" key="5">
    <source>
    </source>
</evidence>
<evidence type="ECO:0000269" key="6">
    <source>
    </source>
</evidence>
<evidence type="ECO:0000269" key="7">
    <source>
    </source>
</evidence>
<evidence type="ECO:0000269" key="8">
    <source>
    </source>
</evidence>
<evidence type="ECO:0000269" key="9">
    <source>
    </source>
</evidence>
<evidence type="ECO:0000303" key="10">
    <source>
    </source>
</evidence>
<evidence type="ECO:0000305" key="11"/>
<evidence type="ECO:0000312" key="12">
    <source>
        <dbReference type="MGI" id="MGI:1355553"/>
    </source>
</evidence>
<comment type="function">
    <text evidence="1 3 4 5 6 7 8">Transcription factor that binds to DNA at the consensus sequence 5'-CAG[GC]TG-3' (PubMed:33712461). Dimerization with TCF3 isoform E47 may be required in certain situations (By similarity). Binds to gene promoters and enhancer elements, and thereby regulates a transcriptional program of retinal ganglion cell (RGC) determinant genes (PubMed:33712461). Although the exact mechanism is not certain, retinal transcription regulation by ATOH7 has a role in RGC determination and survival, photoreceptor population development, targeting of RGC axons to the optic nerve and development of the retino-hypothalamic tract (PubMed:11156601, PubMed:11493566, PubMed:12451142, PubMed:33712461). Binds to its own promoter and enhancer sequences, suggesting autoregulation of ATOH7 transcription (PubMed:33712461). Required for retinal circadian rhythm photoentrainment (PubMed:12451142, PubMed:26392540). Plays a role in brainstem auditory signaling and binaural processing (PubMed:17977745).</text>
</comment>
<comment type="subunit">
    <text evidence="1">Forms a heterodimer with TCF3 isoform E47; interaction may be required for DNA-binding in certain situations.</text>
</comment>
<comment type="subcellular location">
    <subcellularLocation>
        <location evidence="8">Nucleus</location>
    </subcellularLocation>
    <subcellularLocation>
        <location evidence="6">Perikaryon</location>
    </subcellularLocation>
    <subcellularLocation>
        <location evidence="6">Cell projection</location>
        <location evidence="6">Axon</location>
    </subcellularLocation>
</comment>
<comment type="tissue specificity">
    <text evidence="6 7">Expressed in retinal ganglion cells (PubMed:26392540). Expressed in the cerebellum, trapezoid body, ventral nucleus of the lateral lamniscus and in areas of the auditory hindbrain such as the cochlear nucleus, lateral superior olive and medial nucleus of the trapezoid body (PubMed:17977745). Expressed in the modiolar nerve root and in the cochlear in a small group of bushy neurons within the acoustic nerve (PubMed:17977745). Expressed weakly in the sensory epithelia of the saccule and utricle (PubMed:17977745).</text>
</comment>
<comment type="developmental stage">
    <text evidence="6 9">Expression initiates at 11 dpc in the central optic cup and is detected in retinal progenitor cells until birth (PubMed:9806930). In addition to the eye, only expressed in the developing tenth cranial ganglion between 13.5 dpc and 15.5 dpc (PubMed:9806930). Expressed in the retina and faintly expressed in the caudal rhombic lip and rostral rhombic lip at 12.5 dpc (PubMed:17977745). Expressed in the presumptive ventral cochlear nucleus and in initial axons emerging from the cochlear nucleus and extending via the trapezoid body towards the ipsilateral lateral superior olive at 14.5 dpc (PubMed:17977745). Expressed in the cochlear duct epithelium between 14.5 dpc and 17.5 dpc (PubMed:17977745). Expressed in the retina at 16.5 dpc (PubMed:17977745). Expressed in the cochlear nucleus at 16.5 dpc and P8 (PubMed:17977745). Abundantly expressed in the ventral cochlear nucleus and axons originating from these cells that form branches in the lateral superior olive at 18.5dpc (PubMed:17977745).</text>
</comment>
<comment type="disruption phenotype">
    <text evidence="3 4 5 6 7 8 9">Mice are viable and fertile but display multiple optic abnormalities resulting in blindness (PubMed:11156601, PubMed:11493566, PubMed:12451142, PubMed:26392540, PubMed:33712461). Normal hindbrain morphology, however mice show disruption of brainstem auditory signaling and binaural processing (PubMed:17977745). Loss of retinal circadian rhythm photoentrainment, and decreased expression of Opn5 (PubMed:12451142, PubMed:26392540). Loss of the retinohypothalamic tract connecting the retina to the suprachiasmatic nuclei (PubMed:12451142). Loss of axon bundles, optic nerves and chiasmata, with a decreased thickness of the retinal inner plexiform layer and inner nuclear layer (PubMed:11493566). Increase in cone photoreceptors and decrease in dopaminergic amacrine cells in the ganglion cell layer (PubMed:11493566, PubMed:33712461). Loss of retinal Pou4f2-expressing retinal ganglion cells resulting in a decrease in the thickness of the retinal cell layer and loss of the nerve fiber layer (PubMed:11156601, PubMed:11493566). Significant reduction in RGCs and compensatory increase in cone photoreceptors and neurogenic progenitor cells at 14.5 dpc (PubMed:33712461). The 1% of RGCs that survive into adulthood show severe axon guidance defects and extend into the retina instead of targeting the optic disk with only a few forming a rudimentary optic nerve (PubMed:33712461). No observable RGC axonal terminals in the brain and persistent retinal hyaloid vasculature into adulthood (PubMed:33712461). In Atoh7 and Bax double knockout mice, significant reduction in RGCs and compensatory increase in cone photoreceptor cells and neurogenic retinal progenitor cells at 14.5 dpc, however there is no difference in the number of RGCs derived from Atoh7-expressing cells and cone photoreceptors during adulthood (PubMed:33712461). Reduced light spatial receptive fields, slower light-driven responses and reduced pupillary light response (PubMed:33712461).</text>
</comment>
<accession>Q9Z2E5</accession>